<accession>A4Q8F7</accession>
<organism>
    <name type="scientific">Elizabethkingia meningoseptica</name>
    <name type="common">Chryseobacterium meningosepticum</name>
    <dbReference type="NCBI Taxonomy" id="238"/>
    <lineage>
        <taxon>Bacteria</taxon>
        <taxon>Pseudomonadati</taxon>
        <taxon>Bacteroidota</taxon>
        <taxon>Flavobacteriia</taxon>
        <taxon>Flavobacteriales</taxon>
        <taxon>Weeksellaceae</taxon>
        <taxon>Elizabethkingia</taxon>
    </lineage>
</organism>
<protein>
    <recommendedName>
        <fullName>Alpha-N-acetylgalactosaminidase</fullName>
        <ecNumber>3.2.1.49</ecNumber>
    </recommendedName>
    <alternativeName>
        <fullName>Glycosyl hydrolase family 109 protein</fullName>
    </alternativeName>
</protein>
<dbReference type="EC" id="3.2.1.49"/>
<dbReference type="EMBL" id="AM039444">
    <property type="protein sequence ID" value="CAJ01376.1"/>
    <property type="molecule type" value="Genomic_DNA"/>
</dbReference>
<dbReference type="PDB" id="2IXA">
    <property type="method" value="X-ray"/>
    <property type="resolution" value="2.30 A"/>
    <property type="chains" value="A=1-444"/>
</dbReference>
<dbReference type="PDB" id="2IXB">
    <property type="method" value="X-ray"/>
    <property type="resolution" value="2.40 A"/>
    <property type="chains" value="A=1-444"/>
</dbReference>
<dbReference type="PDBsum" id="2IXA"/>
<dbReference type="PDBsum" id="2IXB"/>
<dbReference type="SMR" id="A4Q8F7"/>
<dbReference type="STRING" id="238.BBD35_12400"/>
<dbReference type="CAZy" id="GH109">
    <property type="family name" value="Glycoside Hydrolase Family 109"/>
</dbReference>
<dbReference type="eggNOG" id="COG0673">
    <property type="taxonomic scope" value="Bacteria"/>
</dbReference>
<dbReference type="BRENDA" id="3.2.1.49">
    <property type="organism ID" value="1374"/>
</dbReference>
<dbReference type="EvolutionaryTrace" id="A4Q8F7"/>
<dbReference type="GO" id="GO:0008456">
    <property type="term" value="F:alpha-N-acetylgalactosaminidase activity"/>
    <property type="evidence" value="ECO:0007669"/>
    <property type="project" value="UniProtKB-EC"/>
</dbReference>
<dbReference type="GO" id="GO:0000166">
    <property type="term" value="F:nucleotide binding"/>
    <property type="evidence" value="ECO:0007669"/>
    <property type="project" value="InterPro"/>
</dbReference>
<dbReference type="Gene3D" id="3.30.360.10">
    <property type="entry name" value="Dihydrodipicolinate Reductase, domain 2"/>
    <property type="match status" value="1"/>
</dbReference>
<dbReference type="Gene3D" id="3.40.50.720">
    <property type="entry name" value="NAD(P)-binding Rossmann-like Domain"/>
    <property type="match status" value="1"/>
</dbReference>
<dbReference type="InterPro" id="IPR000683">
    <property type="entry name" value="Gfo/Idh/MocA-like_OxRdtase_N"/>
</dbReference>
<dbReference type="InterPro" id="IPR050463">
    <property type="entry name" value="Gfo/Idh/MocA_oxidrdct_glycsds"/>
</dbReference>
<dbReference type="InterPro" id="IPR049303">
    <property type="entry name" value="Glyco_hydro_109_C"/>
</dbReference>
<dbReference type="InterPro" id="IPR036291">
    <property type="entry name" value="NAD(P)-bd_dom_sf"/>
</dbReference>
<dbReference type="PANTHER" id="PTHR43818">
    <property type="entry name" value="BCDNA.GH03377"/>
    <property type="match status" value="1"/>
</dbReference>
<dbReference type="PANTHER" id="PTHR43818:SF1">
    <property type="entry name" value="GLYCOSYL HYDROLASE FAMILY 109 PROTEIN"/>
    <property type="match status" value="1"/>
</dbReference>
<dbReference type="Pfam" id="PF01408">
    <property type="entry name" value="GFO_IDH_MocA"/>
    <property type="match status" value="1"/>
</dbReference>
<dbReference type="Pfam" id="PF21252">
    <property type="entry name" value="Glyco_hydro_109_C"/>
    <property type="match status" value="1"/>
</dbReference>
<dbReference type="SUPFAM" id="SSF51735">
    <property type="entry name" value="NAD(P)-binding Rossmann-fold domains"/>
    <property type="match status" value="1"/>
</dbReference>
<keyword id="KW-0002">3D-structure</keyword>
<keyword id="KW-0326">Glycosidase</keyword>
<keyword id="KW-0378">Hydrolase</keyword>
<keyword id="KW-0520">NAD</keyword>
<sequence length="444" mass="50211">MGALIPSSTLFNIFDFNPKKVRIAFIAVGLRGQTHVENMARRDDVEIVAFADPDPYMVGRAQEILKKNGKKPAKVFGNGNDDYKNMLKDKNIDAVFVSSPWEWHHEHGVAAMKAGKIVGMEVSGAITLEECWDYVKVSEQTGVPLMALENVCYRRDVMAILNMVRKGMFGELVHGTGGYQHDLRPVLFNSGINGKNGDGVEFGEKAFSEAKWRTNHYKNRNGELYPTHGVGPLHTMMDINRGNRLLRLSSFASKARGLHKYIVDKGGESHPNAKVEWKQGDIVTTQIQCHNGETIVLTHDTSLQRPYNLGFKVQGTEGLWEDFGWGEAAQGFIYFEKIMNHSHRWDSSEKWIKEYDHPMWKKHEQKAVGAGHGGMDYFLDNTFVECIKRNEAFPLDVYDLATWYSITPLSEKSIAENGAVQEIPDFTNGKWKNAKNTFAINDDY</sequence>
<gene>
    <name type="primary">nagA</name>
</gene>
<proteinExistence type="evidence at protein level"/>
<reference key="1">
    <citation type="journal article" date="2007" name="Nat. Biotechnol.">
        <title>Bacterial glycosidases for the production of universal red blood cells.</title>
        <authorList>
            <person name="Liu Q.P."/>
            <person name="Sulzenbacher G."/>
            <person name="Yuan H."/>
            <person name="Bennett E.P."/>
            <person name="Pietz G."/>
            <person name="Saunders K."/>
            <person name="Spence J."/>
            <person name="Nudelman E."/>
            <person name="Levery S.B."/>
            <person name="White T."/>
            <person name="Neveu J.M."/>
            <person name="Lane W.S."/>
            <person name="Bourne Y."/>
            <person name="Olsson M.L."/>
            <person name="Henrissat B."/>
            <person name="Clausen H."/>
        </authorList>
    </citation>
    <scope>NUCLEOTIDE SEQUENCE [GENOMIC DNA]</scope>
    <scope>FUNCTION</scope>
    <scope>CATALYTIC ACTIVITY</scope>
    <scope>BIOPHYSICOCHEMICAL PROPERTIES</scope>
    <scope>COFACTOR</scope>
    <scope>BIOTECHNOLOGY</scope>
    <scope>X-RAY CRYSTALLOGRAPHY (2.3 ANGSTROMS)</scope>
    <source>
        <strain>ATCC 33958</strain>
    </source>
</reference>
<name>GH109_ELIME</name>
<feature type="chain" id="PRO_0000348545" description="Alpha-N-acetylgalactosaminidase">
    <location>
        <begin position="1"/>
        <end position="444"/>
    </location>
</feature>
<feature type="binding site">
    <location>
        <begin position="30"/>
        <end position="31"/>
    </location>
    <ligand>
        <name>NAD(+)</name>
        <dbReference type="ChEBI" id="CHEBI:57540"/>
    </ligand>
</feature>
<feature type="binding site">
    <location>
        <position position="52"/>
    </location>
    <ligand>
        <name>NAD(+)</name>
        <dbReference type="ChEBI" id="CHEBI:57540"/>
    </ligand>
</feature>
<feature type="binding site">
    <location>
        <position position="80"/>
    </location>
    <ligand>
        <name>NAD(+)</name>
        <dbReference type="ChEBI" id="CHEBI:57540"/>
    </ligand>
</feature>
<feature type="binding site">
    <location>
        <begin position="101"/>
        <end position="104"/>
    </location>
    <ligand>
        <name>NAD(+)</name>
        <dbReference type="ChEBI" id="CHEBI:57540"/>
    </ligand>
</feature>
<feature type="binding site">
    <location>
        <position position="107"/>
    </location>
    <ligand>
        <name>NAD(+)</name>
        <dbReference type="ChEBI" id="CHEBI:57540"/>
    </ligand>
</feature>
<feature type="binding site">
    <location>
        <begin position="121"/>
        <end position="122"/>
    </location>
    <ligand>
        <name>NAD(+)</name>
        <dbReference type="ChEBI" id="CHEBI:57540"/>
    </ligand>
</feature>
<feature type="binding site">
    <location>
        <position position="150"/>
    </location>
    <ligand>
        <name>NAD(+)</name>
        <dbReference type="ChEBI" id="CHEBI:57540"/>
    </ligand>
</feature>
<feature type="binding site">
    <location>
        <position position="179"/>
    </location>
    <ligand>
        <name>substrate</name>
    </ligand>
</feature>
<feature type="binding site">
    <location>
        <begin position="208"/>
        <end position="212"/>
    </location>
    <ligand>
        <name>NAD(+)</name>
        <dbReference type="ChEBI" id="CHEBI:57540"/>
    </ligand>
</feature>
<feature type="binding site">
    <location>
        <position position="213"/>
    </location>
    <ligand>
        <name>substrate</name>
    </ligand>
</feature>
<feature type="binding site">
    <location>
        <begin position="225"/>
        <end position="228"/>
    </location>
    <ligand>
        <name>substrate</name>
    </ligand>
</feature>
<feature type="binding site">
    <location>
        <position position="225"/>
    </location>
    <ligand>
        <name>NAD(+)</name>
        <dbReference type="ChEBI" id="CHEBI:57540"/>
    </ligand>
</feature>
<feature type="binding site">
    <location>
        <position position="307"/>
    </location>
    <ligand>
        <name>substrate</name>
    </ligand>
</feature>
<feature type="strand" evidence="3">
    <location>
        <begin position="21"/>
        <end position="26"/>
    </location>
</feature>
<feature type="helix" evidence="3">
    <location>
        <begin position="30"/>
        <end position="40"/>
    </location>
</feature>
<feature type="strand" evidence="3">
    <location>
        <begin position="45"/>
        <end position="51"/>
    </location>
</feature>
<feature type="helix" evidence="3">
    <location>
        <begin position="55"/>
        <end position="67"/>
    </location>
</feature>
<feature type="strand" evidence="3">
    <location>
        <begin position="74"/>
        <end position="76"/>
    </location>
</feature>
<feature type="turn" evidence="3">
    <location>
        <begin position="80"/>
        <end position="82"/>
    </location>
</feature>
<feature type="helix" evidence="3">
    <location>
        <begin position="83"/>
        <end position="86"/>
    </location>
</feature>
<feature type="strand" evidence="3">
    <location>
        <begin position="94"/>
        <end position="97"/>
    </location>
</feature>
<feature type="helix" evidence="3">
    <location>
        <begin position="101"/>
        <end position="103"/>
    </location>
</feature>
<feature type="helix" evidence="3">
    <location>
        <begin position="104"/>
        <end position="113"/>
    </location>
</feature>
<feature type="strand" evidence="3">
    <location>
        <begin position="117"/>
        <end position="120"/>
    </location>
</feature>
<feature type="helix" evidence="3">
    <location>
        <begin position="128"/>
        <end position="141"/>
    </location>
</feature>
<feature type="strand" evidence="3">
    <location>
        <begin position="145"/>
        <end position="147"/>
    </location>
</feature>
<feature type="helix" evidence="3">
    <location>
        <begin position="150"/>
        <end position="153"/>
    </location>
</feature>
<feature type="helix" evidence="3">
    <location>
        <begin position="155"/>
        <end position="165"/>
    </location>
</feature>
<feature type="turn" evidence="3">
    <location>
        <begin position="166"/>
        <end position="169"/>
    </location>
</feature>
<feature type="strand" evidence="3">
    <location>
        <begin position="171"/>
        <end position="177"/>
    </location>
</feature>
<feature type="helix" evidence="3">
    <location>
        <begin position="184"/>
        <end position="187"/>
    </location>
</feature>
<feature type="helix" evidence="3">
    <location>
        <begin position="208"/>
        <end position="211"/>
    </location>
</feature>
<feature type="helix" evidence="3">
    <location>
        <begin position="213"/>
        <end position="219"/>
    </location>
</feature>
<feature type="helix" evidence="3">
    <location>
        <begin position="227"/>
        <end position="237"/>
    </location>
</feature>
<feature type="turn" evidence="3">
    <location>
        <begin position="240"/>
        <end position="242"/>
    </location>
</feature>
<feature type="strand" evidence="3">
    <location>
        <begin position="245"/>
        <end position="252"/>
    </location>
</feature>
<feature type="helix" evidence="3">
    <location>
        <begin position="257"/>
        <end position="266"/>
    </location>
</feature>
<feature type="helix" evidence="3">
    <location>
        <begin position="271"/>
        <end position="274"/>
    </location>
</feature>
<feature type="strand" evidence="3">
    <location>
        <begin position="283"/>
        <end position="289"/>
    </location>
</feature>
<feature type="strand" evidence="3">
    <location>
        <begin position="294"/>
        <end position="300"/>
    </location>
</feature>
<feature type="strand" evidence="3">
    <location>
        <begin position="312"/>
        <end position="317"/>
    </location>
</feature>
<feature type="strand" evidence="3">
    <location>
        <begin position="319"/>
        <end position="322"/>
    </location>
</feature>
<feature type="strand" evidence="3">
    <location>
        <begin position="324"/>
        <end position="326"/>
    </location>
</feature>
<feature type="strand" evidence="3">
    <location>
        <begin position="330"/>
        <end position="334"/>
    </location>
</feature>
<feature type="turn" evidence="3">
    <location>
        <begin position="336"/>
        <end position="341"/>
    </location>
</feature>
<feature type="strand" evidence="3">
    <location>
        <begin position="346"/>
        <end position="348"/>
    </location>
</feature>
<feature type="helix" evidence="3">
    <location>
        <begin position="349"/>
        <end position="354"/>
    </location>
</feature>
<feature type="helix" evidence="3">
    <location>
        <begin position="358"/>
        <end position="367"/>
    </location>
</feature>
<feature type="helix" evidence="3">
    <location>
        <begin position="375"/>
        <end position="389"/>
    </location>
</feature>
<feature type="helix" evidence="3">
    <location>
        <begin position="397"/>
        <end position="415"/>
    </location>
</feature>
<feature type="turn" evidence="3">
    <location>
        <begin position="416"/>
        <end position="418"/>
    </location>
</feature>
<feature type="turn" evidence="3">
    <location>
        <begin position="426"/>
        <end position="433"/>
    </location>
</feature>
<evidence type="ECO:0000269" key="1">
    <source>
    </source>
</evidence>
<evidence type="ECO:0000305" key="2"/>
<evidence type="ECO:0007829" key="3">
    <source>
        <dbReference type="PDB" id="2IXA"/>
    </source>
</evidence>
<comment type="function">
    <text evidence="1">Glycosidase that has specific alpha-N-acetylgalactosaminidase activity.</text>
</comment>
<comment type="catalytic activity">
    <reaction evidence="1">
        <text>Cleavage of non-reducing alpha-(1-&gt;3)-N-acetylgalactosamine residues from human blood group A and AB mucin glycoproteins, Forssman hapten and blood group A lacto series glycolipids.</text>
        <dbReference type="EC" id="3.2.1.49"/>
    </reaction>
</comment>
<comment type="cofactor">
    <cofactor evidence="1">
        <name>NAD(+)</name>
        <dbReference type="ChEBI" id="CHEBI:57540"/>
    </cofactor>
    <text evidence="1">Binds 1 NAD(+) per subunit. The NAD(+) cannot dissociate.</text>
</comment>
<comment type="biophysicochemical properties">
    <kinetics>
        <KM evidence="1">25.1 mM for Galalpha-pNP</KM>
        <KM evidence="1">3.6 mM for Galbeta-pNP</KM>
        <KM evidence="1">0.077 mM for GalNAcalpha-pNP</KM>
        <KM evidence="1">0.23 mM for GalNAcbeta-pNP</KM>
    </kinetics>
    <phDependence>
        <text evidence="1">Optimum pH is 6.8.</text>
    </phDependence>
</comment>
<comment type="biotechnology">
    <text evidence="1">Specifically cleaves the blood group A antigen at neutral pH with low consumption of recombinant enzyme. It is therefore a good candidate to participate in the development of universal red blood cells by removing blood group A antigen.</text>
</comment>
<comment type="similarity">
    <text evidence="2">Belongs to the Gfo/Idh/MocA family. Glycosyl hydrolase 109 subfamily.</text>
</comment>
<comment type="online information" name="Protein Spotlight">
    <link uri="https://www.proteinspotlight.org/back_issues/098"/>
    <text>The juice of life - Issue 98 of October 2008</text>
</comment>